<reference key="1">
    <citation type="journal article" date="2010" name="Genome Biol.">
        <title>Structure and dynamics of the pan-genome of Streptococcus pneumoniae and closely related species.</title>
        <authorList>
            <person name="Donati C."/>
            <person name="Hiller N.L."/>
            <person name="Tettelin H."/>
            <person name="Muzzi A."/>
            <person name="Croucher N.J."/>
            <person name="Angiuoli S.V."/>
            <person name="Oggioni M."/>
            <person name="Dunning Hotopp J.C."/>
            <person name="Hu F.Z."/>
            <person name="Riley D.R."/>
            <person name="Covacci A."/>
            <person name="Mitchell T.J."/>
            <person name="Bentley S.D."/>
            <person name="Kilian M."/>
            <person name="Ehrlich G.D."/>
            <person name="Rappuoli R."/>
            <person name="Moxon E.R."/>
            <person name="Masignani V."/>
        </authorList>
    </citation>
    <scope>NUCLEOTIDE SEQUENCE [LARGE SCALE GENOMIC DNA]</scope>
    <source>
        <strain>70585</strain>
    </source>
</reference>
<gene>
    <name evidence="1" type="primary">gatB</name>
    <name type="ordered locus">SP70585_0505</name>
</gene>
<dbReference type="EC" id="6.3.5.-" evidence="1"/>
<dbReference type="EMBL" id="CP000918">
    <property type="protein sequence ID" value="ACO15968.1"/>
    <property type="molecule type" value="Genomic_DNA"/>
</dbReference>
<dbReference type="RefSeq" id="WP_001008688.1">
    <property type="nucleotide sequence ID" value="NC_012468.1"/>
</dbReference>
<dbReference type="SMR" id="C1C5H1"/>
<dbReference type="KEGG" id="snm:SP70585_0505"/>
<dbReference type="HOGENOM" id="CLU_019240_0_0_9"/>
<dbReference type="Proteomes" id="UP000002211">
    <property type="component" value="Chromosome"/>
</dbReference>
<dbReference type="GO" id="GO:0050566">
    <property type="term" value="F:asparaginyl-tRNA synthase (glutamine-hydrolyzing) activity"/>
    <property type="evidence" value="ECO:0007669"/>
    <property type="project" value="RHEA"/>
</dbReference>
<dbReference type="GO" id="GO:0005524">
    <property type="term" value="F:ATP binding"/>
    <property type="evidence" value="ECO:0007669"/>
    <property type="project" value="UniProtKB-KW"/>
</dbReference>
<dbReference type="GO" id="GO:0050567">
    <property type="term" value="F:glutaminyl-tRNA synthase (glutamine-hydrolyzing) activity"/>
    <property type="evidence" value="ECO:0007669"/>
    <property type="project" value="UniProtKB-UniRule"/>
</dbReference>
<dbReference type="GO" id="GO:0070681">
    <property type="term" value="P:glutaminyl-tRNAGln biosynthesis via transamidation"/>
    <property type="evidence" value="ECO:0007669"/>
    <property type="project" value="TreeGrafter"/>
</dbReference>
<dbReference type="GO" id="GO:0006412">
    <property type="term" value="P:translation"/>
    <property type="evidence" value="ECO:0007669"/>
    <property type="project" value="UniProtKB-UniRule"/>
</dbReference>
<dbReference type="FunFam" id="1.10.10.410:FF:000001">
    <property type="entry name" value="Aspartyl/glutamyl-tRNA(Asn/Gln) amidotransferase subunit B"/>
    <property type="match status" value="1"/>
</dbReference>
<dbReference type="FunFam" id="1.10.150.380:FF:000001">
    <property type="entry name" value="Aspartyl/glutamyl-tRNA(Asn/Gln) amidotransferase subunit B"/>
    <property type="match status" value="1"/>
</dbReference>
<dbReference type="Gene3D" id="1.10.10.410">
    <property type="match status" value="1"/>
</dbReference>
<dbReference type="Gene3D" id="1.10.150.380">
    <property type="entry name" value="GatB domain, N-terminal subdomain"/>
    <property type="match status" value="1"/>
</dbReference>
<dbReference type="HAMAP" id="MF_00121">
    <property type="entry name" value="GatB"/>
    <property type="match status" value="1"/>
</dbReference>
<dbReference type="InterPro" id="IPR017959">
    <property type="entry name" value="Asn/Gln-tRNA_amidoTrfase_suB/E"/>
</dbReference>
<dbReference type="InterPro" id="IPR006075">
    <property type="entry name" value="Asn/Gln-tRNA_Trfase_suB/E_cat"/>
</dbReference>
<dbReference type="InterPro" id="IPR018027">
    <property type="entry name" value="Asn/Gln_amidotransferase"/>
</dbReference>
<dbReference type="InterPro" id="IPR003789">
    <property type="entry name" value="Asn/Gln_tRNA_amidoTrase-B-like"/>
</dbReference>
<dbReference type="InterPro" id="IPR004413">
    <property type="entry name" value="GatB"/>
</dbReference>
<dbReference type="InterPro" id="IPR042114">
    <property type="entry name" value="GatB_C_1"/>
</dbReference>
<dbReference type="InterPro" id="IPR023168">
    <property type="entry name" value="GatB_Yqey_C_2"/>
</dbReference>
<dbReference type="InterPro" id="IPR017958">
    <property type="entry name" value="Gln-tRNA_amidoTrfase_suB_CS"/>
</dbReference>
<dbReference type="InterPro" id="IPR014746">
    <property type="entry name" value="Gln_synth/guanido_kin_cat_dom"/>
</dbReference>
<dbReference type="NCBIfam" id="TIGR00133">
    <property type="entry name" value="gatB"/>
    <property type="match status" value="1"/>
</dbReference>
<dbReference type="NCBIfam" id="NF004011">
    <property type="entry name" value="PRK05477.1-1"/>
    <property type="match status" value="1"/>
</dbReference>
<dbReference type="NCBIfam" id="NF004012">
    <property type="entry name" value="PRK05477.1-2"/>
    <property type="match status" value="1"/>
</dbReference>
<dbReference type="NCBIfam" id="NF004014">
    <property type="entry name" value="PRK05477.1-4"/>
    <property type="match status" value="1"/>
</dbReference>
<dbReference type="PANTHER" id="PTHR11659">
    <property type="entry name" value="GLUTAMYL-TRNA GLN AMIDOTRANSFERASE SUBUNIT B MITOCHONDRIAL AND PROKARYOTIC PET112-RELATED"/>
    <property type="match status" value="1"/>
</dbReference>
<dbReference type="PANTHER" id="PTHR11659:SF0">
    <property type="entry name" value="GLUTAMYL-TRNA(GLN) AMIDOTRANSFERASE SUBUNIT B, MITOCHONDRIAL"/>
    <property type="match status" value="1"/>
</dbReference>
<dbReference type="Pfam" id="PF02934">
    <property type="entry name" value="GatB_N"/>
    <property type="match status" value="1"/>
</dbReference>
<dbReference type="Pfam" id="PF02637">
    <property type="entry name" value="GatB_Yqey"/>
    <property type="match status" value="1"/>
</dbReference>
<dbReference type="SMART" id="SM00845">
    <property type="entry name" value="GatB_Yqey"/>
    <property type="match status" value="1"/>
</dbReference>
<dbReference type="SUPFAM" id="SSF89095">
    <property type="entry name" value="GatB/YqeY motif"/>
    <property type="match status" value="1"/>
</dbReference>
<dbReference type="SUPFAM" id="SSF55931">
    <property type="entry name" value="Glutamine synthetase/guanido kinase"/>
    <property type="match status" value="1"/>
</dbReference>
<dbReference type="PROSITE" id="PS01234">
    <property type="entry name" value="GATB"/>
    <property type="match status" value="1"/>
</dbReference>
<evidence type="ECO:0000255" key="1">
    <source>
        <dbReference type="HAMAP-Rule" id="MF_00121"/>
    </source>
</evidence>
<accession>C1C5H1</accession>
<organism>
    <name type="scientific">Streptococcus pneumoniae (strain 70585)</name>
    <dbReference type="NCBI Taxonomy" id="488221"/>
    <lineage>
        <taxon>Bacteria</taxon>
        <taxon>Bacillati</taxon>
        <taxon>Bacillota</taxon>
        <taxon>Bacilli</taxon>
        <taxon>Lactobacillales</taxon>
        <taxon>Streptococcaceae</taxon>
        <taxon>Streptococcus</taxon>
    </lineage>
</organism>
<protein>
    <recommendedName>
        <fullName evidence="1">Aspartyl/glutamyl-tRNA(Asn/Gln) amidotransferase subunit B</fullName>
        <shortName evidence="1">Asp/Glu-ADT subunit B</shortName>
        <ecNumber evidence="1">6.3.5.-</ecNumber>
    </recommendedName>
</protein>
<feature type="chain" id="PRO_1000122536" description="Aspartyl/glutamyl-tRNA(Asn/Gln) amidotransferase subunit B">
    <location>
        <begin position="1"/>
        <end position="480"/>
    </location>
</feature>
<name>GATB_STRP7</name>
<comment type="function">
    <text evidence="1">Allows the formation of correctly charged Asn-tRNA(Asn) or Gln-tRNA(Gln) through the transamidation of misacylated Asp-tRNA(Asn) or Glu-tRNA(Gln) in organisms which lack either or both of asparaginyl-tRNA or glutaminyl-tRNA synthetases. The reaction takes place in the presence of glutamine and ATP through an activated phospho-Asp-tRNA(Asn) or phospho-Glu-tRNA(Gln).</text>
</comment>
<comment type="catalytic activity">
    <reaction evidence="1">
        <text>L-glutamyl-tRNA(Gln) + L-glutamine + ATP + H2O = L-glutaminyl-tRNA(Gln) + L-glutamate + ADP + phosphate + H(+)</text>
        <dbReference type="Rhea" id="RHEA:17521"/>
        <dbReference type="Rhea" id="RHEA-COMP:9681"/>
        <dbReference type="Rhea" id="RHEA-COMP:9684"/>
        <dbReference type="ChEBI" id="CHEBI:15377"/>
        <dbReference type="ChEBI" id="CHEBI:15378"/>
        <dbReference type="ChEBI" id="CHEBI:29985"/>
        <dbReference type="ChEBI" id="CHEBI:30616"/>
        <dbReference type="ChEBI" id="CHEBI:43474"/>
        <dbReference type="ChEBI" id="CHEBI:58359"/>
        <dbReference type="ChEBI" id="CHEBI:78520"/>
        <dbReference type="ChEBI" id="CHEBI:78521"/>
        <dbReference type="ChEBI" id="CHEBI:456216"/>
    </reaction>
</comment>
<comment type="catalytic activity">
    <reaction evidence="1">
        <text>L-aspartyl-tRNA(Asn) + L-glutamine + ATP + H2O = L-asparaginyl-tRNA(Asn) + L-glutamate + ADP + phosphate + 2 H(+)</text>
        <dbReference type="Rhea" id="RHEA:14513"/>
        <dbReference type="Rhea" id="RHEA-COMP:9674"/>
        <dbReference type="Rhea" id="RHEA-COMP:9677"/>
        <dbReference type="ChEBI" id="CHEBI:15377"/>
        <dbReference type="ChEBI" id="CHEBI:15378"/>
        <dbReference type="ChEBI" id="CHEBI:29985"/>
        <dbReference type="ChEBI" id="CHEBI:30616"/>
        <dbReference type="ChEBI" id="CHEBI:43474"/>
        <dbReference type="ChEBI" id="CHEBI:58359"/>
        <dbReference type="ChEBI" id="CHEBI:78515"/>
        <dbReference type="ChEBI" id="CHEBI:78516"/>
        <dbReference type="ChEBI" id="CHEBI:456216"/>
    </reaction>
</comment>
<comment type="subunit">
    <text evidence="1">Heterotrimer of A, B and C subunits.</text>
</comment>
<comment type="similarity">
    <text evidence="1">Belongs to the GatB/GatE family. GatB subfamily.</text>
</comment>
<keyword id="KW-0067">ATP-binding</keyword>
<keyword id="KW-0436">Ligase</keyword>
<keyword id="KW-0547">Nucleotide-binding</keyword>
<keyword id="KW-0648">Protein biosynthesis</keyword>
<proteinExistence type="inferred from homology"/>
<sequence length="480" mass="53733">MNFETVIGLEVHVELNTNSKIFSPTSAHFGNDQNANTNVIDWSFPGVLPVLNKGVVDAGIKAALALNMDLHKKMHFDRKNYFYPDNPKAYQISQFDEPIGYNGWIEIELEDGTTKKIGIERAHLEEDAGKNTHGTDGYSYVDLNRQGVPLIEIVSEADMRSPEEAYAYLTALKEVIQYAGISDVKMEEGSMRVDANISLRPYGQEKFGTKTELKNLNSFSNVRKGLEYEVQRQAEILRSGGQIRQETRRYDEANKTTILMRVKEGAADYRYFPEPDLPLFEISDEWIEEMRTELPEFPKERRARYVSDLGLSDYDASQLTANKVTSDFFEKAVALGGDAKQVSNWLQGEVAQFLNAEGKTLEQIELTPENLVEMITIIEDGTISSKIAKKVFVHLAKNGGGAREYVEKAGMVQISDPAILIPIIHQVFADNEAAVADFKSGKRNADKAFTGFLMKATKGQANPQVALKLLAQELAKLKEN</sequence>